<name>RNB_ECO27</name>
<evidence type="ECO:0000255" key="1"/>
<evidence type="ECO:0000255" key="2">
    <source>
        <dbReference type="HAMAP-Rule" id="MF_01036"/>
    </source>
</evidence>
<dbReference type="EC" id="3.1.13.1" evidence="2"/>
<dbReference type="EMBL" id="FM180568">
    <property type="protein sequence ID" value="CAS09028.1"/>
    <property type="molecule type" value="Genomic_DNA"/>
</dbReference>
<dbReference type="RefSeq" id="WP_000485010.1">
    <property type="nucleotide sequence ID" value="NC_011601.1"/>
</dbReference>
<dbReference type="SMR" id="B7UR96"/>
<dbReference type="KEGG" id="ecg:E2348C_1480"/>
<dbReference type="HOGENOM" id="CLU_002333_7_3_6"/>
<dbReference type="Proteomes" id="UP000008205">
    <property type="component" value="Chromosome"/>
</dbReference>
<dbReference type="GO" id="GO:0005829">
    <property type="term" value="C:cytosol"/>
    <property type="evidence" value="ECO:0007669"/>
    <property type="project" value="UniProtKB-ARBA"/>
</dbReference>
<dbReference type="GO" id="GO:0008859">
    <property type="term" value="F:exoribonuclease II activity"/>
    <property type="evidence" value="ECO:0007669"/>
    <property type="project" value="UniProtKB-UniRule"/>
</dbReference>
<dbReference type="GO" id="GO:0003723">
    <property type="term" value="F:RNA binding"/>
    <property type="evidence" value="ECO:0007669"/>
    <property type="project" value="UniProtKB-KW"/>
</dbReference>
<dbReference type="GO" id="GO:0006402">
    <property type="term" value="P:mRNA catabolic process"/>
    <property type="evidence" value="ECO:0007669"/>
    <property type="project" value="UniProtKB-UniRule"/>
</dbReference>
<dbReference type="FunFam" id="2.40.50.140:FF:000079">
    <property type="entry name" value="Exoribonuclease 2"/>
    <property type="match status" value="1"/>
</dbReference>
<dbReference type="FunFam" id="2.40.50.140:FF:000081">
    <property type="entry name" value="Exoribonuclease 2"/>
    <property type="match status" value="1"/>
</dbReference>
<dbReference type="FunFam" id="2.40.50.640:FF:000001">
    <property type="entry name" value="Exoribonuclease 2"/>
    <property type="match status" value="1"/>
</dbReference>
<dbReference type="Gene3D" id="2.40.50.640">
    <property type="match status" value="1"/>
</dbReference>
<dbReference type="Gene3D" id="2.40.50.140">
    <property type="entry name" value="Nucleic acid-binding proteins"/>
    <property type="match status" value="2"/>
</dbReference>
<dbReference type="HAMAP" id="MF_01036">
    <property type="entry name" value="RNase_II"/>
    <property type="match status" value="1"/>
</dbReference>
<dbReference type="InterPro" id="IPR011129">
    <property type="entry name" value="CSD"/>
</dbReference>
<dbReference type="InterPro" id="IPR012340">
    <property type="entry name" value="NA-bd_OB-fold"/>
</dbReference>
<dbReference type="InterPro" id="IPR013223">
    <property type="entry name" value="RNase_B_OB_dom"/>
</dbReference>
<dbReference type="InterPro" id="IPR011804">
    <property type="entry name" value="RNase_II"/>
</dbReference>
<dbReference type="InterPro" id="IPR001900">
    <property type="entry name" value="RNase_II/R"/>
</dbReference>
<dbReference type="InterPro" id="IPR022966">
    <property type="entry name" value="RNase_II/R_CS"/>
</dbReference>
<dbReference type="InterPro" id="IPR004476">
    <property type="entry name" value="RNase_II/RNase_R"/>
</dbReference>
<dbReference type="InterPro" id="IPR050180">
    <property type="entry name" value="RNR_Ribonuclease"/>
</dbReference>
<dbReference type="InterPro" id="IPR003029">
    <property type="entry name" value="S1_domain"/>
</dbReference>
<dbReference type="NCBIfam" id="TIGR00358">
    <property type="entry name" value="3_prime_RNase"/>
    <property type="match status" value="1"/>
</dbReference>
<dbReference type="NCBIfam" id="NF003455">
    <property type="entry name" value="PRK05054.1"/>
    <property type="match status" value="1"/>
</dbReference>
<dbReference type="NCBIfam" id="TIGR02062">
    <property type="entry name" value="RNase_B"/>
    <property type="match status" value="1"/>
</dbReference>
<dbReference type="PANTHER" id="PTHR23355:SF37">
    <property type="entry name" value="EXORIBONUCLEASE 2"/>
    <property type="match status" value="1"/>
</dbReference>
<dbReference type="PANTHER" id="PTHR23355">
    <property type="entry name" value="RIBONUCLEASE"/>
    <property type="match status" value="1"/>
</dbReference>
<dbReference type="Pfam" id="PF08206">
    <property type="entry name" value="OB_RNB"/>
    <property type="match status" value="1"/>
</dbReference>
<dbReference type="Pfam" id="PF00773">
    <property type="entry name" value="RNB"/>
    <property type="match status" value="1"/>
</dbReference>
<dbReference type="Pfam" id="PF00575">
    <property type="entry name" value="S1"/>
    <property type="match status" value="1"/>
</dbReference>
<dbReference type="SMART" id="SM00357">
    <property type="entry name" value="CSP"/>
    <property type="match status" value="1"/>
</dbReference>
<dbReference type="SMART" id="SM00955">
    <property type="entry name" value="RNB"/>
    <property type="match status" value="1"/>
</dbReference>
<dbReference type="SUPFAM" id="SSF50249">
    <property type="entry name" value="Nucleic acid-binding proteins"/>
    <property type="match status" value="4"/>
</dbReference>
<dbReference type="PROSITE" id="PS01175">
    <property type="entry name" value="RIBONUCLEASE_II"/>
    <property type="match status" value="1"/>
</dbReference>
<organism>
    <name type="scientific">Escherichia coli O127:H6 (strain E2348/69 / EPEC)</name>
    <dbReference type="NCBI Taxonomy" id="574521"/>
    <lineage>
        <taxon>Bacteria</taxon>
        <taxon>Pseudomonadati</taxon>
        <taxon>Pseudomonadota</taxon>
        <taxon>Gammaproteobacteria</taxon>
        <taxon>Enterobacterales</taxon>
        <taxon>Enterobacteriaceae</taxon>
        <taxon>Escherichia</taxon>
    </lineage>
</organism>
<proteinExistence type="inferred from homology"/>
<gene>
    <name evidence="2" type="primary">rnb</name>
    <name type="ordered locus">E2348C_1480</name>
</gene>
<accession>B7UR96</accession>
<feature type="chain" id="PRO_1000149456" description="Exoribonuclease 2">
    <location>
        <begin position="1"/>
        <end position="644"/>
    </location>
</feature>
<feature type="domain" description="RNB" evidence="1">
    <location>
        <begin position="189"/>
        <end position="516"/>
    </location>
</feature>
<feature type="domain" description="S1 motif" evidence="2">
    <location>
        <begin position="561"/>
        <end position="643"/>
    </location>
</feature>
<protein>
    <recommendedName>
        <fullName evidence="2">Exoribonuclease 2</fullName>
        <ecNumber evidence="2">3.1.13.1</ecNumber>
    </recommendedName>
    <alternativeName>
        <fullName evidence="2">Exoribonuclease II</fullName>
        <shortName evidence="2">RNase II</shortName>
        <shortName evidence="2">Ribonuclease II</shortName>
    </alternativeName>
</protein>
<comment type="function">
    <text evidence="2">Involved in mRNA degradation. Hydrolyzes single-stranded polyribonucleotides processively in the 3' to 5' direction.</text>
</comment>
<comment type="catalytic activity">
    <reaction evidence="2">
        <text>Exonucleolytic cleavage in the 3'- to 5'-direction to yield nucleoside 5'-phosphates.</text>
        <dbReference type="EC" id="3.1.13.1"/>
    </reaction>
</comment>
<comment type="subcellular location">
    <subcellularLocation>
        <location evidence="2">Cytoplasm</location>
    </subcellularLocation>
</comment>
<comment type="similarity">
    <text evidence="2">Belongs to the RNR ribonuclease family. RNase II subfamily.</text>
</comment>
<reference key="1">
    <citation type="journal article" date="2009" name="J. Bacteriol.">
        <title>Complete genome sequence and comparative genome analysis of enteropathogenic Escherichia coli O127:H6 strain E2348/69.</title>
        <authorList>
            <person name="Iguchi A."/>
            <person name="Thomson N.R."/>
            <person name="Ogura Y."/>
            <person name="Saunders D."/>
            <person name="Ooka T."/>
            <person name="Henderson I.R."/>
            <person name="Harris D."/>
            <person name="Asadulghani M."/>
            <person name="Kurokawa K."/>
            <person name="Dean P."/>
            <person name="Kenny B."/>
            <person name="Quail M.A."/>
            <person name="Thurston S."/>
            <person name="Dougan G."/>
            <person name="Hayashi T."/>
            <person name="Parkhill J."/>
            <person name="Frankel G."/>
        </authorList>
    </citation>
    <scope>NUCLEOTIDE SEQUENCE [LARGE SCALE GENOMIC DNA]</scope>
    <source>
        <strain>E2348/69 / EPEC</strain>
    </source>
</reference>
<sequence>MFQDNPLLAQLKQQLHSQTPRAEGVVKATEKGFGFLEVDAQKSYFIPPPQMKKVMHGDRIIAVIHSEKERESAEPEELVEPFLTRFVGKVQGKNDRLAIVPDHPLLKDAIPCRAARGLNHEFKEGDWAVAEMRRHPLKGDRSFYAELTQYITFGDDHFVPWWVTLARHNLEKEAPDGVATEMLDEGLVREDLTALDFVTIDSASTEDMDDALFAKALPDGKLQLIVAIADPTAWIAEGSKLDKAAKIRAFTNYLPGFNIPMLPRELSDDLCSLRANEVRPVLACRMTLSTDGTIEDNIEFFAATIESKAKLVYDQVSDWLENTGDWQPESEAIAEQVRLLAQICQRRGEWRHNHALVFKDRPDYRFILGEKGEVLDIVAEPRRIANRIVEEAMIAANICAARVLRDKLGFGIYNVHMGFDPANADALAALLKTHGLHVDAEEVLTLDGFCKLRRELDAQPTGFLDSRIRRFQSFAEISTEPGPHFGLGLEAYATWTSPIRKYGDMINHRLLKAVIKGETATRPQDEITVQMAERRRLNRIAERDVGDWLYARFLKDKAGTDTRFAAEIVDISRGGMRVRLVDNGAIAFIPAPFLHAVRDELVCSQENGTVQIKGETAYKVTDVIDVTIAEVRMETRSIIARPVA</sequence>
<keyword id="KW-0963">Cytoplasm</keyword>
<keyword id="KW-0269">Exonuclease</keyword>
<keyword id="KW-0378">Hydrolase</keyword>
<keyword id="KW-0540">Nuclease</keyword>
<keyword id="KW-1185">Reference proteome</keyword>
<keyword id="KW-0694">RNA-binding</keyword>